<comment type="similarity">
    <text evidence="1">Belongs to the TTC39 family.</text>
</comment>
<sequence length="562" mass="64762">MSKDAGGGQMNSNLKTSLSECMEALDLFLSNNFQEALDQLRAKSKDSMYHALTYATMLEMQAMMTFDPQDILNAGNTMKEAQAVCQRYRRKSTVVDSFNSLVHKQSLDQFTEEEIHAEVCYAECLLQRAALTFLQDENMVSFIKGGIKVRNSYQTYKELHSLQQCANYAKGESHCHFEGGVKLGVGAFNLTISMLPTRILRLLEFVGFSGNKDYGLSQLQEGTTVHSFRALLCTLLLLCYHTFLRFVLGTGSGNIEEAEKLLEPYLKRYPKGAIFLFFAGRIEEIKGNIDEAISRFEECCESQQNWKQFHHMCYWQLMWCFTYKQHWKMAYFYADLLSKENSWSKATYMYMKAAYLSMFAEDDCKPFGDDEVQIFRLVPSLKLKIAGKSLPTEKFAIRKSRRYLAQKLVPLPVPPLEMMYIWNGYAVIGKHQDLTEAMLQTLVRAEKSLEGVTASEFLIDDRCVVKLLKGLCYKYLGRIPEAVESFSYIQLNEKRIKYDHYLVPNAMLELALLYLQLEKKEEALRLLENAKNNYKNYSMESRTHFRIQDALQQAKSLPQNGC</sequence>
<evidence type="ECO:0000305" key="1"/>
<reference key="1">
    <citation type="submission" date="2006-10" db="EMBL/GenBank/DDBJ databases">
        <authorList>
            <consortium name="Sanger Xenopus tropicalis EST/cDNA project"/>
        </authorList>
    </citation>
    <scope>NUCLEOTIDE SEQUENCE [LARGE SCALE MRNA]</scope>
    <source>
        <tissue>Gastrula</tissue>
    </source>
</reference>
<organism>
    <name type="scientific">Xenopus tropicalis</name>
    <name type="common">Western clawed frog</name>
    <name type="synonym">Silurana tropicalis</name>
    <dbReference type="NCBI Taxonomy" id="8364"/>
    <lineage>
        <taxon>Eukaryota</taxon>
        <taxon>Metazoa</taxon>
        <taxon>Chordata</taxon>
        <taxon>Craniata</taxon>
        <taxon>Vertebrata</taxon>
        <taxon>Euteleostomi</taxon>
        <taxon>Amphibia</taxon>
        <taxon>Batrachia</taxon>
        <taxon>Anura</taxon>
        <taxon>Pipoidea</taxon>
        <taxon>Pipidae</taxon>
        <taxon>Xenopodinae</taxon>
        <taxon>Xenopus</taxon>
        <taxon>Silurana</taxon>
    </lineage>
</organism>
<dbReference type="EMBL" id="CR855725">
    <property type="protein sequence ID" value="CAJ82519.1"/>
    <property type="molecule type" value="mRNA"/>
</dbReference>
<dbReference type="RefSeq" id="NP_001016774.1">
    <property type="nucleotide sequence ID" value="NM_001016774.2"/>
</dbReference>
<dbReference type="SMR" id="Q28D40"/>
<dbReference type="FunCoup" id="Q28D40">
    <property type="interactions" value="83"/>
</dbReference>
<dbReference type="PaxDb" id="8364-ENSXETP00000062767"/>
<dbReference type="GeneID" id="549528"/>
<dbReference type="KEGG" id="xtr:549528"/>
<dbReference type="AGR" id="Xenbase:XB-GENE-1014287"/>
<dbReference type="CTD" id="22996"/>
<dbReference type="Xenbase" id="XB-GENE-1014287">
    <property type="gene designation" value="ttc39a"/>
</dbReference>
<dbReference type="eggNOG" id="KOG3783">
    <property type="taxonomic scope" value="Eukaryota"/>
</dbReference>
<dbReference type="InParanoid" id="Q28D40"/>
<dbReference type="OMA" id="GESHCHF"/>
<dbReference type="OrthoDB" id="43460at2759"/>
<dbReference type="Proteomes" id="UP000008143">
    <property type="component" value="Chromosome 4"/>
</dbReference>
<dbReference type="Bgee" id="ENSXETG00000002835">
    <property type="expression patterns" value="Expressed in egg cell and 9 other cell types or tissues"/>
</dbReference>
<dbReference type="Gene3D" id="1.25.40.10">
    <property type="entry name" value="Tetratricopeptide repeat domain"/>
    <property type="match status" value="2"/>
</dbReference>
<dbReference type="InterPro" id="IPR019412">
    <property type="entry name" value="Iml2/TPR_39"/>
</dbReference>
<dbReference type="InterPro" id="IPR011990">
    <property type="entry name" value="TPR-like_helical_dom_sf"/>
</dbReference>
<dbReference type="InterPro" id="IPR019734">
    <property type="entry name" value="TPR_rpt"/>
</dbReference>
<dbReference type="PANTHER" id="PTHR31859">
    <property type="entry name" value="TETRATRICOPEPTIDE REPEAT PROTEIN 39 FAMILY MEMBER"/>
    <property type="match status" value="1"/>
</dbReference>
<dbReference type="PANTHER" id="PTHR31859:SF3">
    <property type="entry name" value="TETRATRICOPEPTIDE REPEAT PROTEIN 39A"/>
    <property type="match status" value="1"/>
</dbReference>
<dbReference type="Pfam" id="PF10300">
    <property type="entry name" value="Iml2-TPR_39"/>
    <property type="match status" value="1"/>
</dbReference>
<dbReference type="Pfam" id="PF13174">
    <property type="entry name" value="TPR_6"/>
    <property type="match status" value="1"/>
</dbReference>
<dbReference type="SMART" id="SM00028">
    <property type="entry name" value="TPR"/>
    <property type="match status" value="3"/>
</dbReference>
<dbReference type="SUPFAM" id="SSF48452">
    <property type="entry name" value="TPR-like"/>
    <property type="match status" value="1"/>
</dbReference>
<feature type="chain" id="PRO_0000291999" description="Tetratricopeptide repeat protein 39A">
    <location>
        <begin position="1"/>
        <end position="562"/>
    </location>
</feature>
<feature type="repeat" description="TPR 1">
    <location>
        <begin position="273"/>
        <end position="306"/>
    </location>
</feature>
<feature type="repeat" description="TPR 2">
    <location>
        <begin position="463"/>
        <end position="496"/>
    </location>
</feature>
<feature type="repeat" description="TPR 3">
    <location>
        <begin position="504"/>
        <end position="537"/>
    </location>
</feature>
<protein>
    <recommendedName>
        <fullName>Tetratricopeptide repeat protein 39A</fullName>
        <shortName>TPR repeat protein 39A</shortName>
    </recommendedName>
</protein>
<keyword id="KW-1185">Reference proteome</keyword>
<keyword id="KW-0677">Repeat</keyword>
<keyword id="KW-0802">TPR repeat</keyword>
<proteinExistence type="evidence at transcript level"/>
<accession>Q28D40</accession>
<gene>
    <name type="primary">ttc39a</name>
    <name type="ORF">TGas136f11.1</name>
</gene>
<name>TT39A_XENTR</name>